<organism>
    <name type="scientific">Mycobacterium ulcerans (strain Agy99)</name>
    <dbReference type="NCBI Taxonomy" id="362242"/>
    <lineage>
        <taxon>Bacteria</taxon>
        <taxon>Bacillati</taxon>
        <taxon>Actinomycetota</taxon>
        <taxon>Actinomycetes</taxon>
        <taxon>Mycobacteriales</taxon>
        <taxon>Mycobacteriaceae</taxon>
        <taxon>Mycobacterium</taxon>
        <taxon>Mycobacterium ulcerans group</taxon>
    </lineage>
</organism>
<protein>
    <recommendedName>
        <fullName evidence="1">Glutamate 5-kinase</fullName>
        <ecNumber evidence="1">2.7.2.11</ecNumber>
    </recommendedName>
    <alternativeName>
        <fullName evidence="1">Gamma-glutamyl kinase</fullName>
        <shortName evidence="1">GK</shortName>
    </alternativeName>
</protein>
<name>PROB_MYCUA</name>
<feature type="chain" id="PRO_1000081078" description="Glutamate 5-kinase">
    <location>
        <begin position="1"/>
        <end position="368"/>
    </location>
</feature>
<feature type="domain" description="PUA" evidence="1">
    <location>
        <begin position="280"/>
        <end position="358"/>
    </location>
</feature>
<feature type="binding site" evidence="1">
    <location>
        <position position="18"/>
    </location>
    <ligand>
        <name>ATP</name>
        <dbReference type="ChEBI" id="CHEBI:30616"/>
    </ligand>
</feature>
<feature type="binding site" evidence="1">
    <location>
        <position position="58"/>
    </location>
    <ligand>
        <name>substrate</name>
    </ligand>
</feature>
<feature type="binding site" evidence="1">
    <location>
        <position position="145"/>
    </location>
    <ligand>
        <name>substrate</name>
    </ligand>
</feature>
<feature type="binding site" evidence="1">
    <location>
        <position position="157"/>
    </location>
    <ligand>
        <name>substrate</name>
    </ligand>
</feature>
<feature type="binding site" evidence="1">
    <location>
        <begin position="177"/>
        <end position="178"/>
    </location>
    <ligand>
        <name>ATP</name>
        <dbReference type="ChEBI" id="CHEBI:30616"/>
    </ligand>
</feature>
<feature type="binding site" evidence="1">
    <location>
        <begin position="218"/>
        <end position="224"/>
    </location>
    <ligand>
        <name>ATP</name>
        <dbReference type="ChEBI" id="CHEBI:30616"/>
    </ligand>
</feature>
<reference key="1">
    <citation type="journal article" date="2007" name="Genome Res.">
        <title>Reductive evolution and niche adaptation inferred from the genome of Mycobacterium ulcerans, the causative agent of Buruli ulcer.</title>
        <authorList>
            <person name="Stinear T.P."/>
            <person name="Seemann T."/>
            <person name="Pidot S."/>
            <person name="Frigui W."/>
            <person name="Reysset G."/>
            <person name="Garnier T."/>
            <person name="Meurice G."/>
            <person name="Simon D."/>
            <person name="Bouchier C."/>
            <person name="Ma L."/>
            <person name="Tichit M."/>
            <person name="Porter J.L."/>
            <person name="Ryan J."/>
            <person name="Johnson P.D.R."/>
            <person name="Davies J.K."/>
            <person name="Jenkin G.A."/>
            <person name="Small P.L.C."/>
            <person name="Jones L.M."/>
            <person name="Tekaia F."/>
            <person name="Laval F."/>
            <person name="Daffe M."/>
            <person name="Parkhill J."/>
            <person name="Cole S.T."/>
        </authorList>
    </citation>
    <scope>NUCLEOTIDE SEQUENCE [LARGE SCALE GENOMIC DNA]</scope>
    <source>
        <strain>Agy99</strain>
    </source>
</reference>
<accession>A0PU14</accession>
<keyword id="KW-0028">Amino-acid biosynthesis</keyword>
<keyword id="KW-0067">ATP-binding</keyword>
<keyword id="KW-0963">Cytoplasm</keyword>
<keyword id="KW-0418">Kinase</keyword>
<keyword id="KW-0547">Nucleotide-binding</keyword>
<keyword id="KW-0641">Proline biosynthesis</keyword>
<keyword id="KW-0808">Transferase</keyword>
<proteinExistence type="inferred from homology"/>
<comment type="function">
    <text evidence="1">Catalyzes the transfer of a phosphate group to glutamate to form L-glutamate 5-phosphate.</text>
</comment>
<comment type="catalytic activity">
    <reaction evidence="1">
        <text>L-glutamate + ATP = L-glutamyl 5-phosphate + ADP</text>
        <dbReference type="Rhea" id="RHEA:14877"/>
        <dbReference type="ChEBI" id="CHEBI:29985"/>
        <dbReference type="ChEBI" id="CHEBI:30616"/>
        <dbReference type="ChEBI" id="CHEBI:58274"/>
        <dbReference type="ChEBI" id="CHEBI:456216"/>
        <dbReference type="EC" id="2.7.2.11"/>
    </reaction>
</comment>
<comment type="pathway">
    <text evidence="1">Amino-acid biosynthesis; L-proline biosynthesis; L-glutamate 5-semialdehyde from L-glutamate: step 1/2.</text>
</comment>
<comment type="subcellular location">
    <subcellularLocation>
        <location evidence="1">Cytoplasm</location>
    </subcellularLocation>
</comment>
<comment type="similarity">
    <text evidence="1">Belongs to the glutamate 5-kinase family.</text>
</comment>
<sequence length="368" mass="37963">MGSPHREAIRTARSVVVKVGTTALTTPSGVFDAGRLAELADAIESRMKAGTDVVIVSSGAIAAGIEPLGLSRRPKDLATKQAAASVGQVALVNSWSAAFARYGRTVGQVLLTAHDIAMRVQHTNAQRTLDRLRALHAVGIVNENDTVATNEIRFGDNDRLSALVAHLVGADALVLLSDIDGLYDADPRKFQNARFIPEVSGPADLDGVVAGQGSHLGTGGMASKMSSALLAADAGVPVLLAPAADAAAALTDASVGTVFAARSERMSARRFWVRYAAESAGSLTLDEGAVRAVVGHRRSLLPAGITAVAGKFFGGDVVDLCGPDATMVARGVVAYDATELAAMMGRSTSELPGELRRPAVHADDLVAV</sequence>
<dbReference type="EC" id="2.7.2.11" evidence="1"/>
<dbReference type="EMBL" id="CP000325">
    <property type="protein sequence ID" value="ABL05833.1"/>
    <property type="molecule type" value="Genomic_DNA"/>
</dbReference>
<dbReference type="RefSeq" id="WP_011741438.1">
    <property type="nucleotide sequence ID" value="NC_008611.1"/>
</dbReference>
<dbReference type="SMR" id="A0PU14"/>
<dbReference type="KEGG" id="mul:MUL_3711"/>
<dbReference type="eggNOG" id="COG0263">
    <property type="taxonomic scope" value="Bacteria"/>
</dbReference>
<dbReference type="HOGENOM" id="CLU_025400_2_0_11"/>
<dbReference type="UniPathway" id="UPA00098">
    <property type="reaction ID" value="UER00359"/>
</dbReference>
<dbReference type="Proteomes" id="UP000000765">
    <property type="component" value="Chromosome"/>
</dbReference>
<dbReference type="GO" id="GO:0005829">
    <property type="term" value="C:cytosol"/>
    <property type="evidence" value="ECO:0007669"/>
    <property type="project" value="TreeGrafter"/>
</dbReference>
<dbReference type="GO" id="GO:0005524">
    <property type="term" value="F:ATP binding"/>
    <property type="evidence" value="ECO:0007669"/>
    <property type="project" value="UniProtKB-KW"/>
</dbReference>
<dbReference type="GO" id="GO:0004349">
    <property type="term" value="F:glutamate 5-kinase activity"/>
    <property type="evidence" value="ECO:0007669"/>
    <property type="project" value="UniProtKB-UniRule"/>
</dbReference>
<dbReference type="GO" id="GO:0003723">
    <property type="term" value="F:RNA binding"/>
    <property type="evidence" value="ECO:0007669"/>
    <property type="project" value="InterPro"/>
</dbReference>
<dbReference type="GO" id="GO:0055129">
    <property type="term" value="P:L-proline biosynthetic process"/>
    <property type="evidence" value="ECO:0007669"/>
    <property type="project" value="UniProtKB-UniRule"/>
</dbReference>
<dbReference type="CDD" id="cd04242">
    <property type="entry name" value="AAK_G5K_ProB"/>
    <property type="match status" value="1"/>
</dbReference>
<dbReference type="CDD" id="cd21157">
    <property type="entry name" value="PUA_G5K"/>
    <property type="match status" value="1"/>
</dbReference>
<dbReference type="FunFam" id="3.40.1160.10:FF:000018">
    <property type="entry name" value="Glutamate 5-kinase"/>
    <property type="match status" value="1"/>
</dbReference>
<dbReference type="Gene3D" id="3.40.1160.10">
    <property type="entry name" value="Acetylglutamate kinase-like"/>
    <property type="match status" value="1"/>
</dbReference>
<dbReference type="Gene3D" id="2.30.130.10">
    <property type="entry name" value="PUA domain"/>
    <property type="match status" value="1"/>
</dbReference>
<dbReference type="HAMAP" id="MF_00456">
    <property type="entry name" value="ProB"/>
    <property type="match status" value="1"/>
</dbReference>
<dbReference type="InterPro" id="IPR036393">
    <property type="entry name" value="AceGlu_kinase-like_sf"/>
</dbReference>
<dbReference type="InterPro" id="IPR001048">
    <property type="entry name" value="Asp/Glu/Uridylate_kinase"/>
</dbReference>
<dbReference type="InterPro" id="IPR041739">
    <property type="entry name" value="G5K_ProB"/>
</dbReference>
<dbReference type="InterPro" id="IPR001057">
    <property type="entry name" value="Glu/AcGlu_kinase"/>
</dbReference>
<dbReference type="InterPro" id="IPR011529">
    <property type="entry name" value="Glu_5kinase"/>
</dbReference>
<dbReference type="InterPro" id="IPR005715">
    <property type="entry name" value="Glu_5kinase/COase_Synthase"/>
</dbReference>
<dbReference type="InterPro" id="IPR019797">
    <property type="entry name" value="Glutamate_5-kinase_CS"/>
</dbReference>
<dbReference type="InterPro" id="IPR002478">
    <property type="entry name" value="PUA"/>
</dbReference>
<dbReference type="InterPro" id="IPR015947">
    <property type="entry name" value="PUA-like_sf"/>
</dbReference>
<dbReference type="InterPro" id="IPR036974">
    <property type="entry name" value="PUA_sf"/>
</dbReference>
<dbReference type="NCBIfam" id="TIGR01027">
    <property type="entry name" value="proB"/>
    <property type="match status" value="1"/>
</dbReference>
<dbReference type="PANTHER" id="PTHR43654">
    <property type="entry name" value="GLUTAMATE 5-KINASE"/>
    <property type="match status" value="1"/>
</dbReference>
<dbReference type="PANTHER" id="PTHR43654:SF1">
    <property type="entry name" value="ISOPENTENYL PHOSPHATE KINASE"/>
    <property type="match status" value="1"/>
</dbReference>
<dbReference type="Pfam" id="PF00696">
    <property type="entry name" value="AA_kinase"/>
    <property type="match status" value="1"/>
</dbReference>
<dbReference type="Pfam" id="PF01472">
    <property type="entry name" value="PUA"/>
    <property type="match status" value="1"/>
</dbReference>
<dbReference type="PIRSF" id="PIRSF000729">
    <property type="entry name" value="GK"/>
    <property type="match status" value="1"/>
</dbReference>
<dbReference type="PRINTS" id="PR00474">
    <property type="entry name" value="GLU5KINASE"/>
</dbReference>
<dbReference type="SMART" id="SM00359">
    <property type="entry name" value="PUA"/>
    <property type="match status" value="1"/>
</dbReference>
<dbReference type="SUPFAM" id="SSF53633">
    <property type="entry name" value="Carbamate kinase-like"/>
    <property type="match status" value="1"/>
</dbReference>
<dbReference type="SUPFAM" id="SSF88697">
    <property type="entry name" value="PUA domain-like"/>
    <property type="match status" value="1"/>
</dbReference>
<dbReference type="PROSITE" id="PS00902">
    <property type="entry name" value="GLUTAMATE_5_KINASE"/>
    <property type="match status" value="1"/>
</dbReference>
<dbReference type="PROSITE" id="PS50890">
    <property type="entry name" value="PUA"/>
    <property type="match status" value="1"/>
</dbReference>
<gene>
    <name evidence="1" type="primary">proB</name>
    <name type="ordered locus">MUL_3711</name>
</gene>
<evidence type="ECO:0000255" key="1">
    <source>
        <dbReference type="HAMAP-Rule" id="MF_00456"/>
    </source>
</evidence>